<proteinExistence type="inferred from homology"/>
<name>HTPG_GLUOX</name>
<evidence type="ECO:0000255" key="1">
    <source>
        <dbReference type="HAMAP-Rule" id="MF_00505"/>
    </source>
</evidence>
<keyword id="KW-0067">ATP-binding</keyword>
<keyword id="KW-0143">Chaperone</keyword>
<keyword id="KW-0963">Cytoplasm</keyword>
<keyword id="KW-0547">Nucleotide-binding</keyword>
<keyword id="KW-1185">Reference proteome</keyword>
<keyword id="KW-0346">Stress response</keyword>
<protein>
    <recommendedName>
        <fullName evidence="1">Chaperone protein HtpG</fullName>
    </recommendedName>
    <alternativeName>
        <fullName evidence="1">Heat shock protein HtpG</fullName>
    </alternativeName>
    <alternativeName>
        <fullName evidence="1">High temperature protein G</fullName>
    </alternativeName>
</protein>
<comment type="function">
    <text evidence="1">Molecular chaperone. Has ATPase activity.</text>
</comment>
<comment type="subunit">
    <text evidence="1">Homodimer.</text>
</comment>
<comment type="subcellular location">
    <subcellularLocation>
        <location evidence="1">Cytoplasm</location>
    </subcellularLocation>
</comment>
<comment type="similarity">
    <text evidence="1">Belongs to the heat shock protein 90 family.</text>
</comment>
<sequence>MSETNTQKAAEKHEFSAEVGRLLDLVVHALYSDREIFLRELVANAADATDKRRFEALTDSALALPENASIRINPDKSQKELTISDDGVGMTHDELAQNLGTIARSGTRAFGEKLNAAKPEDRPSLIGQFGVGFYAAFMVADRVDVTSRKAGSDEAWTWSSDGKGAFTLTPASRSTPGTDIVLHMKDDADEFLDSWRLRSIIRKWADHISWPITLRETKEDGTTEDQAANEGTALWSKPKSEITPEQYAEFYRHISHAFDEPYATLHWRAEGVTEFTALLFLPSARPFDFMEQSRESRIHLHVRRMFITDEAELVPNWMRFVQGVVDTEDLPLNVSREMLQATPVLARIRKAVTKRVLSEISKRAKEADSGFNSFWENFGAVIKEGLWEDAEHRTEIAGFARFHSTYSDDLITLDDYISRMKDGQDAIYYLTGDSLDALKSSAQLEGFRARGLEVLLLSDPVDGFWPERLSSYQEKPLRSVTHSHGDLEKFESVEADTTEAADVEKLVPALKDALGDQVKDVRSTVRLTGSAVVITSDGGPDLTMQRLMRRSGQAMPAMPPILEINPKHPLIKALAERVAKGESVKDYATVLLDLARVQEGEPLPDPTGFGRSLATLLAGPAAE</sequence>
<accession>Q5FS51</accession>
<gene>
    <name evidence="1" type="primary">htpG</name>
    <name type="ordered locus">GOX1024</name>
</gene>
<organism>
    <name type="scientific">Gluconobacter oxydans (strain 621H)</name>
    <name type="common">Gluconobacter suboxydans</name>
    <dbReference type="NCBI Taxonomy" id="290633"/>
    <lineage>
        <taxon>Bacteria</taxon>
        <taxon>Pseudomonadati</taxon>
        <taxon>Pseudomonadota</taxon>
        <taxon>Alphaproteobacteria</taxon>
        <taxon>Acetobacterales</taxon>
        <taxon>Acetobacteraceae</taxon>
        <taxon>Gluconobacter</taxon>
    </lineage>
</organism>
<dbReference type="EMBL" id="CP000009">
    <property type="protein sequence ID" value="AAW60795.1"/>
    <property type="molecule type" value="Genomic_DNA"/>
</dbReference>
<dbReference type="RefSeq" id="WP_011252588.1">
    <property type="nucleotide sequence ID" value="NC_006677.1"/>
</dbReference>
<dbReference type="SMR" id="Q5FS51"/>
<dbReference type="STRING" id="290633.GOX1024"/>
<dbReference type="KEGG" id="gox:GOX1024"/>
<dbReference type="eggNOG" id="COG0326">
    <property type="taxonomic scope" value="Bacteria"/>
</dbReference>
<dbReference type="HOGENOM" id="CLU_006684_3_0_5"/>
<dbReference type="Proteomes" id="UP000006375">
    <property type="component" value="Chromosome"/>
</dbReference>
<dbReference type="GO" id="GO:0005737">
    <property type="term" value="C:cytoplasm"/>
    <property type="evidence" value="ECO:0007669"/>
    <property type="project" value="UniProtKB-SubCell"/>
</dbReference>
<dbReference type="GO" id="GO:0005524">
    <property type="term" value="F:ATP binding"/>
    <property type="evidence" value="ECO:0007669"/>
    <property type="project" value="UniProtKB-UniRule"/>
</dbReference>
<dbReference type="GO" id="GO:0016887">
    <property type="term" value="F:ATP hydrolysis activity"/>
    <property type="evidence" value="ECO:0007669"/>
    <property type="project" value="InterPro"/>
</dbReference>
<dbReference type="GO" id="GO:0140662">
    <property type="term" value="F:ATP-dependent protein folding chaperone"/>
    <property type="evidence" value="ECO:0007669"/>
    <property type="project" value="InterPro"/>
</dbReference>
<dbReference type="GO" id="GO:0051082">
    <property type="term" value="F:unfolded protein binding"/>
    <property type="evidence" value="ECO:0007669"/>
    <property type="project" value="UniProtKB-UniRule"/>
</dbReference>
<dbReference type="CDD" id="cd16927">
    <property type="entry name" value="HATPase_Hsp90-like"/>
    <property type="match status" value="1"/>
</dbReference>
<dbReference type="FunFam" id="3.30.565.10:FF:000009">
    <property type="entry name" value="Molecular chaperone HtpG"/>
    <property type="match status" value="1"/>
</dbReference>
<dbReference type="Gene3D" id="3.30.230.80">
    <property type="match status" value="1"/>
</dbReference>
<dbReference type="Gene3D" id="3.40.50.11260">
    <property type="match status" value="1"/>
</dbReference>
<dbReference type="Gene3D" id="1.20.120.790">
    <property type="entry name" value="Heat shock protein 90, C-terminal domain"/>
    <property type="match status" value="1"/>
</dbReference>
<dbReference type="Gene3D" id="3.30.565.10">
    <property type="entry name" value="Histidine kinase-like ATPase, C-terminal domain"/>
    <property type="match status" value="1"/>
</dbReference>
<dbReference type="HAMAP" id="MF_00505">
    <property type="entry name" value="HSP90"/>
    <property type="match status" value="1"/>
</dbReference>
<dbReference type="InterPro" id="IPR036890">
    <property type="entry name" value="HATPase_C_sf"/>
</dbReference>
<dbReference type="InterPro" id="IPR019805">
    <property type="entry name" value="Heat_shock_protein_90_CS"/>
</dbReference>
<dbReference type="InterPro" id="IPR037196">
    <property type="entry name" value="HSP90_C"/>
</dbReference>
<dbReference type="InterPro" id="IPR001404">
    <property type="entry name" value="Hsp90_fam"/>
</dbReference>
<dbReference type="InterPro" id="IPR020575">
    <property type="entry name" value="Hsp90_N"/>
</dbReference>
<dbReference type="InterPro" id="IPR020568">
    <property type="entry name" value="Ribosomal_Su5_D2-typ_SF"/>
</dbReference>
<dbReference type="NCBIfam" id="NF003555">
    <property type="entry name" value="PRK05218.1"/>
    <property type="match status" value="1"/>
</dbReference>
<dbReference type="PANTHER" id="PTHR11528">
    <property type="entry name" value="HEAT SHOCK PROTEIN 90 FAMILY MEMBER"/>
    <property type="match status" value="1"/>
</dbReference>
<dbReference type="Pfam" id="PF13589">
    <property type="entry name" value="HATPase_c_3"/>
    <property type="match status" value="1"/>
</dbReference>
<dbReference type="Pfam" id="PF00183">
    <property type="entry name" value="HSP90"/>
    <property type="match status" value="1"/>
</dbReference>
<dbReference type="PIRSF" id="PIRSF002583">
    <property type="entry name" value="Hsp90"/>
    <property type="match status" value="1"/>
</dbReference>
<dbReference type="PRINTS" id="PR00775">
    <property type="entry name" value="HEATSHOCK90"/>
</dbReference>
<dbReference type="SMART" id="SM00387">
    <property type="entry name" value="HATPase_c"/>
    <property type="match status" value="1"/>
</dbReference>
<dbReference type="SUPFAM" id="SSF55874">
    <property type="entry name" value="ATPase domain of HSP90 chaperone/DNA topoisomerase II/histidine kinase"/>
    <property type="match status" value="1"/>
</dbReference>
<dbReference type="SUPFAM" id="SSF110942">
    <property type="entry name" value="HSP90 C-terminal domain"/>
    <property type="match status" value="1"/>
</dbReference>
<dbReference type="SUPFAM" id="SSF54211">
    <property type="entry name" value="Ribosomal protein S5 domain 2-like"/>
    <property type="match status" value="1"/>
</dbReference>
<dbReference type="PROSITE" id="PS00298">
    <property type="entry name" value="HSP90"/>
    <property type="match status" value="1"/>
</dbReference>
<feature type="chain" id="PRO_0000224209" description="Chaperone protein HtpG">
    <location>
        <begin position="1"/>
        <end position="623"/>
    </location>
</feature>
<feature type="region of interest" description="A; substrate-binding" evidence="1">
    <location>
        <begin position="1"/>
        <end position="336"/>
    </location>
</feature>
<feature type="region of interest" description="B" evidence="1">
    <location>
        <begin position="337"/>
        <end position="546"/>
    </location>
</feature>
<feature type="region of interest" description="C" evidence="1">
    <location>
        <begin position="547"/>
        <end position="623"/>
    </location>
</feature>
<reference key="1">
    <citation type="journal article" date="2005" name="Nat. Biotechnol.">
        <title>Complete genome sequence of the acetic acid bacterium Gluconobacter oxydans.</title>
        <authorList>
            <person name="Prust C."/>
            <person name="Hoffmeister M."/>
            <person name="Liesegang H."/>
            <person name="Wiezer A."/>
            <person name="Fricke W.F."/>
            <person name="Ehrenreich A."/>
            <person name="Gottschalk G."/>
            <person name="Deppenmeier U."/>
        </authorList>
    </citation>
    <scope>NUCLEOTIDE SEQUENCE [LARGE SCALE GENOMIC DNA]</scope>
    <source>
        <strain>621H</strain>
    </source>
</reference>